<comment type="function">
    <text evidence="1">One of the components of the core complex of photosystem II (PSII), required for its stability and/or assembly. PSII is a light-driven water:plastoquinone oxidoreductase that uses light energy to abstract electrons from H(2)O, generating O(2) and a proton gradient subsequently used for ATP formation. It consists of a core antenna complex that captures photons, and an electron transfer chain that converts photonic excitation into a charge separation.</text>
</comment>
<comment type="subunit">
    <text evidence="1">PSII is composed of 1 copy each of membrane proteins PsbA, PsbB, PsbC, PsbD, PsbE, PsbF, PsbH, PsbI, PsbJ, PsbK, PsbL, PsbM, PsbT, PsbX, PsbY, PsbZ, Psb30/Ycf12, peripheral proteins PsbO, CyanoQ (PsbQ), PsbU, PsbV and a large number of cofactors. It forms dimeric complexes.</text>
</comment>
<comment type="subcellular location">
    <subcellularLocation>
        <location evidence="1">Cellular thylakoid membrane</location>
        <topology evidence="1">Single-pass membrane protein</topology>
    </subcellularLocation>
</comment>
<comment type="similarity">
    <text evidence="1">Belongs to the PsbI family.</text>
</comment>
<proteinExistence type="inferred from homology"/>
<keyword id="KW-0472">Membrane</keyword>
<keyword id="KW-0602">Photosynthesis</keyword>
<keyword id="KW-0604">Photosystem II</keyword>
<keyword id="KW-0674">Reaction center</keyword>
<keyword id="KW-1185">Reference proteome</keyword>
<keyword id="KW-0793">Thylakoid</keyword>
<keyword id="KW-0812">Transmembrane</keyword>
<keyword id="KW-1133">Transmembrane helix</keyword>
<accession>Q3AW25</accession>
<name>PSBI_SYNS9</name>
<gene>
    <name evidence="1" type="primary">psbI</name>
    <name type="ordered locus">Syncc9902_2084</name>
</gene>
<sequence>MLALKISVYSVVFFFLGIFVFGFLASDPSRTPSRKDLED</sequence>
<dbReference type="EMBL" id="CP000097">
    <property type="protein sequence ID" value="ABB27042.1"/>
    <property type="molecule type" value="Genomic_DNA"/>
</dbReference>
<dbReference type="RefSeq" id="WP_006042333.1">
    <property type="nucleotide sequence ID" value="NC_007513.1"/>
</dbReference>
<dbReference type="SMR" id="Q3AW25"/>
<dbReference type="STRING" id="316279.Syncc9902_2084"/>
<dbReference type="KEGG" id="sye:Syncc9902_2084"/>
<dbReference type="eggNOG" id="ENOG5033CII">
    <property type="taxonomic scope" value="Bacteria"/>
</dbReference>
<dbReference type="HOGENOM" id="CLU_212150_0_0_3"/>
<dbReference type="Proteomes" id="UP000002712">
    <property type="component" value="Chromosome"/>
</dbReference>
<dbReference type="GO" id="GO:0009539">
    <property type="term" value="C:photosystem II reaction center"/>
    <property type="evidence" value="ECO:0007669"/>
    <property type="project" value="InterPro"/>
</dbReference>
<dbReference type="GO" id="GO:0031676">
    <property type="term" value="C:plasma membrane-derived thylakoid membrane"/>
    <property type="evidence" value="ECO:0007669"/>
    <property type="project" value="UniProtKB-SubCell"/>
</dbReference>
<dbReference type="GO" id="GO:0015979">
    <property type="term" value="P:photosynthesis"/>
    <property type="evidence" value="ECO:0007669"/>
    <property type="project" value="UniProtKB-UniRule"/>
</dbReference>
<dbReference type="HAMAP" id="MF_01316">
    <property type="entry name" value="PSII_PsbI"/>
    <property type="match status" value="1"/>
</dbReference>
<dbReference type="InterPro" id="IPR003686">
    <property type="entry name" value="PSII_PsbI"/>
</dbReference>
<dbReference type="InterPro" id="IPR037271">
    <property type="entry name" value="PSII_PsbI_sf"/>
</dbReference>
<dbReference type="NCBIfam" id="NF002735">
    <property type="entry name" value="PRK02655.1"/>
    <property type="match status" value="1"/>
</dbReference>
<dbReference type="PANTHER" id="PTHR35772">
    <property type="entry name" value="PHOTOSYSTEM II REACTION CENTER PROTEIN I"/>
    <property type="match status" value="1"/>
</dbReference>
<dbReference type="PANTHER" id="PTHR35772:SF1">
    <property type="entry name" value="PHOTOSYSTEM II REACTION CENTER PROTEIN I"/>
    <property type="match status" value="1"/>
</dbReference>
<dbReference type="Pfam" id="PF02532">
    <property type="entry name" value="PsbI"/>
    <property type="match status" value="1"/>
</dbReference>
<dbReference type="SUPFAM" id="SSF161041">
    <property type="entry name" value="Photosystem II reaction center protein I, PsbI"/>
    <property type="match status" value="1"/>
</dbReference>
<protein>
    <recommendedName>
        <fullName evidence="1">Photosystem II reaction center protein I</fullName>
        <shortName evidence="1">PSII-I</shortName>
    </recommendedName>
    <alternativeName>
        <fullName evidence="1">PSII 4.4 kDa protein</fullName>
    </alternativeName>
</protein>
<evidence type="ECO:0000255" key="1">
    <source>
        <dbReference type="HAMAP-Rule" id="MF_01316"/>
    </source>
</evidence>
<feature type="chain" id="PRO_0000298304" description="Photosystem II reaction center protein I">
    <location>
        <begin position="1"/>
        <end position="39"/>
    </location>
</feature>
<feature type="transmembrane region" description="Helical" evidence="1">
    <location>
        <begin position="6"/>
        <end position="26"/>
    </location>
</feature>
<organism>
    <name type="scientific">Synechococcus sp. (strain CC9902)</name>
    <dbReference type="NCBI Taxonomy" id="316279"/>
    <lineage>
        <taxon>Bacteria</taxon>
        <taxon>Bacillati</taxon>
        <taxon>Cyanobacteriota</taxon>
        <taxon>Cyanophyceae</taxon>
        <taxon>Synechococcales</taxon>
        <taxon>Synechococcaceae</taxon>
        <taxon>Synechococcus</taxon>
    </lineage>
</organism>
<reference key="1">
    <citation type="submission" date="2005-08" db="EMBL/GenBank/DDBJ databases">
        <title>Complete sequence of Synechococcus sp. CC9902.</title>
        <authorList>
            <person name="Copeland A."/>
            <person name="Lucas S."/>
            <person name="Lapidus A."/>
            <person name="Barry K."/>
            <person name="Detter J.C."/>
            <person name="Glavina T."/>
            <person name="Hammon N."/>
            <person name="Israni S."/>
            <person name="Pitluck S."/>
            <person name="Martinez M."/>
            <person name="Schmutz J."/>
            <person name="Larimer F."/>
            <person name="Land M."/>
            <person name="Kyrpides N."/>
            <person name="Ivanova N."/>
            <person name="Richardson P."/>
        </authorList>
    </citation>
    <scope>NUCLEOTIDE SEQUENCE [LARGE SCALE GENOMIC DNA]</scope>
    <source>
        <strain>CC9902</strain>
    </source>
</reference>